<name>DAPB_BRUME</name>
<sequence length="268" mass="27693">MGLVVVGAGGRMGQTLIRTIQSIEGAKLVGAIERSGSPFLGKDAGEVTGIGTLGVAITDDPLPVFAKAHGVLDFTSPAASVEFAGLAAQARIVHVIGTTGCSAEDDEKIRAAARHATIVKSGNMSLGVNLLSVLVQKAAEALGPEDFDIEILEMHHRHKVDAPSGTALLLGEAAARGRDIALADNSVRVRDGYTGPRETGTIGFATLRGGSVIGDHSVILADTGERVVLSHHAEDRSIFARGAIKAALWAHGKKPGLYSMLDVLGLNT</sequence>
<gene>
    <name evidence="1" type="primary">dapB</name>
    <name type="ordered locus">BMEII0249</name>
</gene>
<dbReference type="EC" id="1.17.1.8" evidence="1"/>
<dbReference type="EMBL" id="AE008918">
    <property type="protein sequence ID" value="AAL53490.1"/>
    <property type="status" value="ALT_INIT"/>
    <property type="molecule type" value="Genomic_DNA"/>
</dbReference>
<dbReference type="PIR" id="AG3540">
    <property type="entry name" value="AG3540"/>
</dbReference>
<dbReference type="RefSeq" id="WP_004682474.1">
    <property type="nucleotide sequence ID" value="NZ_GG703779.1"/>
</dbReference>
<dbReference type="SMR" id="Q8YDC8"/>
<dbReference type="GeneID" id="29595733"/>
<dbReference type="KEGG" id="bme:BMEII0249"/>
<dbReference type="KEGG" id="bmel:DK63_2992"/>
<dbReference type="PATRIC" id="fig|224914.52.peg.3138"/>
<dbReference type="eggNOG" id="COG0289">
    <property type="taxonomic scope" value="Bacteria"/>
</dbReference>
<dbReference type="UniPathway" id="UPA00034">
    <property type="reaction ID" value="UER00018"/>
</dbReference>
<dbReference type="Proteomes" id="UP000000419">
    <property type="component" value="Chromosome II"/>
</dbReference>
<dbReference type="GO" id="GO:0005829">
    <property type="term" value="C:cytosol"/>
    <property type="evidence" value="ECO:0007669"/>
    <property type="project" value="TreeGrafter"/>
</dbReference>
<dbReference type="GO" id="GO:0008839">
    <property type="term" value="F:4-hydroxy-tetrahydrodipicolinate reductase"/>
    <property type="evidence" value="ECO:0007669"/>
    <property type="project" value="UniProtKB-EC"/>
</dbReference>
<dbReference type="GO" id="GO:0051287">
    <property type="term" value="F:NAD binding"/>
    <property type="evidence" value="ECO:0007669"/>
    <property type="project" value="UniProtKB-UniRule"/>
</dbReference>
<dbReference type="GO" id="GO:0050661">
    <property type="term" value="F:NADP binding"/>
    <property type="evidence" value="ECO:0007669"/>
    <property type="project" value="UniProtKB-UniRule"/>
</dbReference>
<dbReference type="GO" id="GO:0016726">
    <property type="term" value="F:oxidoreductase activity, acting on CH or CH2 groups, NAD or NADP as acceptor"/>
    <property type="evidence" value="ECO:0007669"/>
    <property type="project" value="UniProtKB-UniRule"/>
</dbReference>
<dbReference type="GO" id="GO:0019877">
    <property type="term" value="P:diaminopimelate biosynthetic process"/>
    <property type="evidence" value="ECO:0007669"/>
    <property type="project" value="UniProtKB-UniRule"/>
</dbReference>
<dbReference type="GO" id="GO:0009089">
    <property type="term" value="P:lysine biosynthetic process via diaminopimelate"/>
    <property type="evidence" value="ECO:0007669"/>
    <property type="project" value="UniProtKB-UniRule"/>
</dbReference>
<dbReference type="CDD" id="cd02274">
    <property type="entry name" value="DHDPR_N"/>
    <property type="match status" value="1"/>
</dbReference>
<dbReference type="FunFam" id="3.30.360.10:FF:000004">
    <property type="entry name" value="4-hydroxy-tetrahydrodipicolinate reductase"/>
    <property type="match status" value="1"/>
</dbReference>
<dbReference type="Gene3D" id="3.30.360.10">
    <property type="entry name" value="Dihydrodipicolinate Reductase, domain 2"/>
    <property type="match status" value="1"/>
</dbReference>
<dbReference type="Gene3D" id="3.40.50.720">
    <property type="entry name" value="NAD(P)-binding Rossmann-like Domain"/>
    <property type="match status" value="1"/>
</dbReference>
<dbReference type="HAMAP" id="MF_00102">
    <property type="entry name" value="DapB"/>
    <property type="match status" value="1"/>
</dbReference>
<dbReference type="InterPro" id="IPR022663">
    <property type="entry name" value="DapB_C"/>
</dbReference>
<dbReference type="InterPro" id="IPR000846">
    <property type="entry name" value="DapB_N"/>
</dbReference>
<dbReference type="InterPro" id="IPR022664">
    <property type="entry name" value="DapB_N_CS"/>
</dbReference>
<dbReference type="InterPro" id="IPR023940">
    <property type="entry name" value="DHDPR_bac"/>
</dbReference>
<dbReference type="InterPro" id="IPR036291">
    <property type="entry name" value="NAD(P)-bd_dom_sf"/>
</dbReference>
<dbReference type="NCBIfam" id="TIGR00036">
    <property type="entry name" value="dapB"/>
    <property type="match status" value="1"/>
</dbReference>
<dbReference type="PANTHER" id="PTHR20836:SF0">
    <property type="entry name" value="4-HYDROXY-TETRAHYDRODIPICOLINATE REDUCTASE 1, CHLOROPLASTIC-RELATED"/>
    <property type="match status" value="1"/>
</dbReference>
<dbReference type="PANTHER" id="PTHR20836">
    <property type="entry name" value="DIHYDRODIPICOLINATE REDUCTASE"/>
    <property type="match status" value="1"/>
</dbReference>
<dbReference type="Pfam" id="PF05173">
    <property type="entry name" value="DapB_C"/>
    <property type="match status" value="1"/>
</dbReference>
<dbReference type="Pfam" id="PF01113">
    <property type="entry name" value="DapB_N"/>
    <property type="match status" value="1"/>
</dbReference>
<dbReference type="PIRSF" id="PIRSF000161">
    <property type="entry name" value="DHPR"/>
    <property type="match status" value="1"/>
</dbReference>
<dbReference type="SUPFAM" id="SSF55347">
    <property type="entry name" value="Glyceraldehyde-3-phosphate dehydrogenase-like, C-terminal domain"/>
    <property type="match status" value="1"/>
</dbReference>
<dbReference type="SUPFAM" id="SSF51735">
    <property type="entry name" value="NAD(P)-binding Rossmann-fold domains"/>
    <property type="match status" value="1"/>
</dbReference>
<dbReference type="PROSITE" id="PS01298">
    <property type="entry name" value="DAPB"/>
    <property type="match status" value="1"/>
</dbReference>
<feature type="chain" id="PRO_0000141417" description="4-hydroxy-tetrahydrodipicolinate reductase">
    <location>
        <begin position="1"/>
        <end position="268"/>
    </location>
</feature>
<feature type="active site" description="Proton donor/acceptor" evidence="1">
    <location>
        <position position="155"/>
    </location>
</feature>
<feature type="active site" description="Proton donor" evidence="1">
    <location>
        <position position="159"/>
    </location>
</feature>
<feature type="binding site" evidence="1">
    <location>
        <begin position="7"/>
        <end position="12"/>
    </location>
    <ligand>
        <name>NAD(+)</name>
        <dbReference type="ChEBI" id="CHEBI:57540"/>
    </ligand>
</feature>
<feature type="binding site" evidence="1">
    <location>
        <position position="33"/>
    </location>
    <ligand>
        <name>NAD(+)</name>
        <dbReference type="ChEBI" id="CHEBI:57540"/>
    </ligand>
</feature>
<feature type="binding site" evidence="1">
    <location>
        <position position="34"/>
    </location>
    <ligand>
        <name>NADP(+)</name>
        <dbReference type="ChEBI" id="CHEBI:58349"/>
    </ligand>
</feature>
<feature type="binding site" evidence="1">
    <location>
        <begin position="97"/>
        <end position="99"/>
    </location>
    <ligand>
        <name>NAD(+)</name>
        <dbReference type="ChEBI" id="CHEBI:57540"/>
    </ligand>
</feature>
<feature type="binding site" evidence="1">
    <location>
        <begin position="121"/>
        <end position="124"/>
    </location>
    <ligand>
        <name>NAD(+)</name>
        <dbReference type="ChEBI" id="CHEBI:57540"/>
    </ligand>
</feature>
<feature type="binding site" evidence="1">
    <location>
        <position position="156"/>
    </location>
    <ligand>
        <name>(S)-2,3,4,5-tetrahydrodipicolinate</name>
        <dbReference type="ChEBI" id="CHEBI:16845"/>
    </ligand>
</feature>
<feature type="binding site" evidence="1">
    <location>
        <begin position="165"/>
        <end position="166"/>
    </location>
    <ligand>
        <name>(S)-2,3,4,5-tetrahydrodipicolinate</name>
        <dbReference type="ChEBI" id="CHEBI:16845"/>
    </ligand>
</feature>
<organism>
    <name type="scientific">Brucella melitensis biotype 1 (strain ATCC 23456 / CCUG 17765 / NCTC 10094 / 16M)</name>
    <dbReference type="NCBI Taxonomy" id="224914"/>
    <lineage>
        <taxon>Bacteria</taxon>
        <taxon>Pseudomonadati</taxon>
        <taxon>Pseudomonadota</taxon>
        <taxon>Alphaproteobacteria</taxon>
        <taxon>Hyphomicrobiales</taxon>
        <taxon>Brucellaceae</taxon>
        <taxon>Brucella/Ochrobactrum group</taxon>
        <taxon>Brucella</taxon>
    </lineage>
</organism>
<reference key="1">
    <citation type="journal article" date="2002" name="Proc. Natl. Acad. Sci. U.S.A.">
        <title>The genome sequence of the facultative intracellular pathogen Brucella melitensis.</title>
        <authorList>
            <person name="DelVecchio V.G."/>
            <person name="Kapatral V."/>
            <person name="Redkar R.J."/>
            <person name="Patra G."/>
            <person name="Mujer C."/>
            <person name="Los T."/>
            <person name="Ivanova N."/>
            <person name="Anderson I."/>
            <person name="Bhattacharyya A."/>
            <person name="Lykidis A."/>
            <person name="Reznik G."/>
            <person name="Jablonski L."/>
            <person name="Larsen N."/>
            <person name="D'Souza M."/>
            <person name="Bernal A."/>
            <person name="Mazur M."/>
            <person name="Goltsman E."/>
            <person name="Selkov E."/>
            <person name="Elzer P.H."/>
            <person name="Hagius S."/>
            <person name="O'Callaghan D."/>
            <person name="Letesson J.-J."/>
            <person name="Haselkorn R."/>
            <person name="Kyrpides N.C."/>
            <person name="Overbeek R."/>
        </authorList>
    </citation>
    <scope>NUCLEOTIDE SEQUENCE [LARGE SCALE GENOMIC DNA]</scope>
    <source>
        <strain>ATCC 23456 / CCUG 17765 / NCTC 10094 / 16M</strain>
    </source>
</reference>
<protein>
    <recommendedName>
        <fullName evidence="1">4-hydroxy-tetrahydrodipicolinate reductase</fullName>
        <shortName evidence="1">HTPA reductase</shortName>
        <ecNumber evidence="1">1.17.1.8</ecNumber>
    </recommendedName>
</protein>
<evidence type="ECO:0000255" key="1">
    <source>
        <dbReference type="HAMAP-Rule" id="MF_00102"/>
    </source>
</evidence>
<evidence type="ECO:0000305" key="2"/>
<comment type="function">
    <text evidence="1">Catalyzes the conversion of 4-hydroxy-tetrahydrodipicolinate (HTPA) to tetrahydrodipicolinate.</text>
</comment>
<comment type="catalytic activity">
    <reaction evidence="1">
        <text>(S)-2,3,4,5-tetrahydrodipicolinate + NAD(+) + H2O = (2S,4S)-4-hydroxy-2,3,4,5-tetrahydrodipicolinate + NADH + H(+)</text>
        <dbReference type="Rhea" id="RHEA:35323"/>
        <dbReference type="ChEBI" id="CHEBI:15377"/>
        <dbReference type="ChEBI" id="CHEBI:15378"/>
        <dbReference type="ChEBI" id="CHEBI:16845"/>
        <dbReference type="ChEBI" id="CHEBI:57540"/>
        <dbReference type="ChEBI" id="CHEBI:57945"/>
        <dbReference type="ChEBI" id="CHEBI:67139"/>
        <dbReference type="EC" id="1.17.1.8"/>
    </reaction>
</comment>
<comment type="catalytic activity">
    <reaction evidence="1">
        <text>(S)-2,3,4,5-tetrahydrodipicolinate + NADP(+) + H2O = (2S,4S)-4-hydroxy-2,3,4,5-tetrahydrodipicolinate + NADPH + H(+)</text>
        <dbReference type="Rhea" id="RHEA:35331"/>
        <dbReference type="ChEBI" id="CHEBI:15377"/>
        <dbReference type="ChEBI" id="CHEBI:15378"/>
        <dbReference type="ChEBI" id="CHEBI:16845"/>
        <dbReference type="ChEBI" id="CHEBI:57783"/>
        <dbReference type="ChEBI" id="CHEBI:58349"/>
        <dbReference type="ChEBI" id="CHEBI:67139"/>
        <dbReference type="EC" id="1.17.1.8"/>
    </reaction>
</comment>
<comment type="pathway">
    <text evidence="1">Amino-acid biosynthesis; L-lysine biosynthesis via DAP pathway; (S)-tetrahydrodipicolinate from L-aspartate: step 4/4.</text>
</comment>
<comment type="subcellular location">
    <subcellularLocation>
        <location evidence="1">Cytoplasm</location>
    </subcellularLocation>
</comment>
<comment type="similarity">
    <text evidence="1">Belongs to the DapB family.</text>
</comment>
<comment type="caution">
    <text evidence="2">Was originally thought to be a dihydrodipicolinate reductase (DHDPR), catalyzing the conversion of dihydrodipicolinate to tetrahydrodipicolinate. However, it was shown in E.coli that the substrate of the enzymatic reaction is not dihydrodipicolinate (DHDP) but in fact (2S,4S)-4-hydroxy-2,3,4,5-tetrahydrodipicolinic acid (HTPA), the product released by the DapA-catalyzed reaction.</text>
</comment>
<comment type="sequence caution" evidence="2">
    <conflict type="erroneous initiation">
        <sequence resource="EMBL-CDS" id="AAL53490"/>
    </conflict>
</comment>
<proteinExistence type="inferred from homology"/>
<keyword id="KW-0028">Amino-acid biosynthesis</keyword>
<keyword id="KW-0963">Cytoplasm</keyword>
<keyword id="KW-0220">Diaminopimelate biosynthesis</keyword>
<keyword id="KW-0457">Lysine biosynthesis</keyword>
<keyword id="KW-0520">NAD</keyword>
<keyword id="KW-0521">NADP</keyword>
<keyword id="KW-0560">Oxidoreductase</keyword>
<accession>Q8YDC8</accession>